<reference key="1">
    <citation type="journal article" date="2009" name="J. Bacteriol.">
        <title>Complete genome sequence of Haemophilus parasuis SH0165.</title>
        <authorList>
            <person name="Yue M."/>
            <person name="Yang F."/>
            <person name="Yang J."/>
            <person name="Bei W."/>
            <person name="Cai X."/>
            <person name="Chen L."/>
            <person name="Dong J."/>
            <person name="Zhou R."/>
            <person name="Jin M."/>
            <person name="Jin Q."/>
            <person name="Chen H."/>
        </authorList>
    </citation>
    <scope>NUCLEOTIDE SEQUENCE [LARGE SCALE GENOMIC DNA]</scope>
    <source>
        <strain>SH0165</strain>
    </source>
</reference>
<dbReference type="EC" id="6.3.2.8" evidence="1"/>
<dbReference type="EMBL" id="CP001321">
    <property type="protein sequence ID" value="ACL31819.1"/>
    <property type="molecule type" value="Genomic_DNA"/>
</dbReference>
<dbReference type="RefSeq" id="WP_012621564.1">
    <property type="nucleotide sequence ID" value="NC_011852.1"/>
</dbReference>
<dbReference type="SMR" id="B8F3B7"/>
<dbReference type="STRING" id="557723.HAPS_0120"/>
<dbReference type="GeneID" id="66618513"/>
<dbReference type="KEGG" id="hap:HAPS_0120"/>
<dbReference type="PATRIC" id="fig|557723.8.peg.125"/>
<dbReference type="HOGENOM" id="CLU_028104_2_2_6"/>
<dbReference type="UniPathway" id="UPA00219"/>
<dbReference type="Proteomes" id="UP000006743">
    <property type="component" value="Chromosome"/>
</dbReference>
<dbReference type="GO" id="GO:0005737">
    <property type="term" value="C:cytoplasm"/>
    <property type="evidence" value="ECO:0007669"/>
    <property type="project" value="UniProtKB-SubCell"/>
</dbReference>
<dbReference type="GO" id="GO:0005524">
    <property type="term" value="F:ATP binding"/>
    <property type="evidence" value="ECO:0007669"/>
    <property type="project" value="UniProtKB-UniRule"/>
</dbReference>
<dbReference type="GO" id="GO:0008763">
    <property type="term" value="F:UDP-N-acetylmuramate-L-alanine ligase activity"/>
    <property type="evidence" value="ECO:0007669"/>
    <property type="project" value="UniProtKB-UniRule"/>
</dbReference>
<dbReference type="GO" id="GO:0051301">
    <property type="term" value="P:cell division"/>
    <property type="evidence" value="ECO:0007669"/>
    <property type="project" value="UniProtKB-KW"/>
</dbReference>
<dbReference type="GO" id="GO:0071555">
    <property type="term" value="P:cell wall organization"/>
    <property type="evidence" value="ECO:0007669"/>
    <property type="project" value="UniProtKB-KW"/>
</dbReference>
<dbReference type="GO" id="GO:0009252">
    <property type="term" value="P:peptidoglycan biosynthetic process"/>
    <property type="evidence" value="ECO:0007669"/>
    <property type="project" value="UniProtKB-UniRule"/>
</dbReference>
<dbReference type="GO" id="GO:0008360">
    <property type="term" value="P:regulation of cell shape"/>
    <property type="evidence" value="ECO:0007669"/>
    <property type="project" value="UniProtKB-KW"/>
</dbReference>
<dbReference type="FunFam" id="3.40.1190.10:FF:000001">
    <property type="entry name" value="UDP-N-acetylmuramate--L-alanine ligase"/>
    <property type="match status" value="1"/>
</dbReference>
<dbReference type="FunFam" id="3.40.50.720:FF:000046">
    <property type="entry name" value="UDP-N-acetylmuramate--L-alanine ligase"/>
    <property type="match status" value="1"/>
</dbReference>
<dbReference type="Gene3D" id="3.90.190.20">
    <property type="entry name" value="Mur ligase, C-terminal domain"/>
    <property type="match status" value="1"/>
</dbReference>
<dbReference type="Gene3D" id="3.40.1190.10">
    <property type="entry name" value="Mur-like, catalytic domain"/>
    <property type="match status" value="1"/>
</dbReference>
<dbReference type="Gene3D" id="3.40.50.720">
    <property type="entry name" value="NAD(P)-binding Rossmann-like Domain"/>
    <property type="match status" value="1"/>
</dbReference>
<dbReference type="HAMAP" id="MF_00046">
    <property type="entry name" value="MurC"/>
    <property type="match status" value="1"/>
</dbReference>
<dbReference type="InterPro" id="IPR036565">
    <property type="entry name" value="Mur-like_cat_sf"/>
</dbReference>
<dbReference type="InterPro" id="IPR004101">
    <property type="entry name" value="Mur_ligase_C"/>
</dbReference>
<dbReference type="InterPro" id="IPR036615">
    <property type="entry name" value="Mur_ligase_C_dom_sf"/>
</dbReference>
<dbReference type="InterPro" id="IPR013221">
    <property type="entry name" value="Mur_ligase_cen"/>
</dbReference>
<dbReference type="InterPro" id="IPR000713">
    <property type="entry name" value="Mur_ligase_N"/>
</dbReference>
<dbReference type="InterPro" id="IPR050061">
    <property type="entry name" value="MurCDEF_pg_biosynth"/>
</dbReference>
<dbReference type="InterPro" id="IPR005758">
    <property type="entry name" value="UDP-N-AcMur_Ala_ligase_MurC"/>
</dbReference>
<dbReference type="NCBIfam" id="TIGR01082">
    <property type="entry name" value="murC"/>
    <property type="match status" value="1"/>
</dbReference>
<dbReference type="PANTHER" id="PTHR43445:SF3">
    <property type="entry name" value="UDP-N-ACETYLMURAMATE--L-ALANINE LIGASE"/>
    <property type="match status" value="1"/>
</dbReference>
<dbReference type="PANTHER" id="PTHR43445">
    <property type="entry name" value="UDP-N-ACETYLMURAMATE--L-ALANINE LIGASE-RELATED"/>
    <property type="match status" value="1"/>
</dbReference>
<dbReference type="Pfam" id="PF01225">
    <property type="entry name" value="Mur_ligase"/>
    <property type="match status" value="1"/>
</dbReference>
<dbReference type="Pfam" id="PF02875">
    <property type="entry name" value="Mur_ligase_C"/>
    <property type="match status" value="1"/>
</dbReference>
<dbReference type="Pfam" id="PF08245">
    <property type="entry name" value="Mur_ligase_M"/>
    <property type="match status" value="1"/>
</dbReference>
<dbReference type="SUPFAM" id="SSF51984">
    <property type="entry name" value="MurCD N-terminal domain"/>
    <property type="match status" value="1"/>
</dbReference>
<dbReference type="SUPFAM" id="SSF53623">
    <property type="entry name" value="MurD-like peptide ligases, catalytic domain"/>
    <property type="match status" value="1"/>
</dbReference>
<dbReference type="SUPFAM" id="SSF53244">
    <property type="entry name" value="MurD-like peptide ligases, peptide-binding domain"/>
    <property type="match status" value="1"/>
</dbReference>
<comment type="function">
    <text evidence="1">Cell wall formation.</text>
</comment>
<comment type="catalytic activity">
    <reaction evidence="1">
        <text>UDP-N-acetyl-alpha-D-muramate + L-alanine + ATP = UDP-N-acetyl-alpha-D-muramoyl-L-alanine + ADP + phosphate + H(+)</text>
        <dbReference type="Rhea" id="RHEA:23372"/>
        <dbReference type="ChEBI" id="CHEBI:15378"/>
        <dbReference type="ChEBI" id="CHEBI:30616"/>
        <dbReference type="ChEBI" id="CHEBI:43474"/>
        <dbReference type="ChEBI" id="CHEBI:57972"/>
        <dbReference type="ChEBI" id="CHEBI:70757"/>
        <dbReference type="ChEBI" id="CHEBI:83898"/>
        <dbReference type="ChEBI" id="CHEBI:456216"/>
        <dbReference type="EC" id="6.3.2.8"/>
    </reaction>
</comment>
<comment type="pathway">
    <text evidence="1">Cell wall biogenesis; peptidoglycan biosynthesis.</text>
</comment>
<comment type="subcellular location">
    <subcellularLocation>
        <location evidence="1">Cytoplasm</location>
    </subcellularLocation>
</comment>
<comment type="similarity">
    <text evidence="1">Belongs to the MurCDEF family.</text>
</comment>
<accession>B8F3B7</accession>
<proteinExistence type="inferred from homology"/>
<feature type="chain" id="PRO_1000192094" description="UDP-N-acetylmuramate--L-alanine ligase">
    <location>
        <begin position="1"/>
        <end position="475"/>
    </location>
</feature>
<feature type="binding site" evidence="1">
    <location>
        <begin position="125"/>
        <end position="131"/>
    </location>
    <ligand>
        <name>ATP</name>
        <dbReference type="ChEBI" id="CHEBI:30616"/>
    </ligand>
</feature>
<organism>
    <name type="scientific">Glaesserella parasuis serovar 5 (strain SH0165)</name>
    <name type="common">Haemophilus parasuis</name>
    <dbReference type="NCBI Taxonomy" id="557723"/>
    <lineage>
        <taxon>Bacteria</taxon>
        <taxon>Pseudomonadati</taxon>
        <taxon>Pseudomonadota</taxon>
        <taxon>Gammaproteobacteria</taxon>
        <taxon>Pasteurellales</taxon>
        <taxon>Pasteurellaceae</taxon>
        <taxon>Glaesserella</taxon>
    </lineage>
</organism>
<protein>
    <recommendedName>
        <fullName evidence="1">UDP-N-acetylmuramate--L-alanine ligase</fullName>
        <ecNumber evidence="1">6.3.2.8</ecNumber>
    </recommendedName>
    <alternativeName>
        <fullName evidence="1">UDP-N-acetylmuramoyl-L-alanine synthetase</fullName>
    </alternativeName>
</protein>
<gene>
    <name evidence="1" type="primary">murC</name>
    <name type="ordered locus">HAPS_0120</name>
</gene>
<evidence type="ECO:0000255" key="1">
    <source>
        <dbReference type="HAMAP-Rule" id="MF_00046"/>
    </source>
</evidence>
<keyword id="KW-0067">ATP-binding</keyword>
<keyword id="KW-0131">Cell cycle</keyword>
<keyword id="KW-0132">Cell division</keyword>
<keyword id="KW-0133">Cell shape</keyword>
<keyword id="KW-0961">Cell wall biogenesis/degradation</keyword>
<keyword id="KW-0963">Cytoplasm</keyword>
<keyword id="KW-0436">Ligase</keyword>
<keyword id="KW-0547">Nucleotide-binding</keyword>
<keyword id="KW-0573">Peptidoglycan synthesis</keyword>
<keyword id="KW-1185">Reference proteome</keyword>
<name>MURC_GLAP5</name>
<sequence>MKNFQDKVKKLVAEMRRVNQIHFIGIGGAGMSGIAEVLLNEGYQISGSDIADGAVTQRLAKAGAKVFIGHQAENIEGASVVVASSAINESNPEVAAAKEARIPVIQRAQMLAEIMRFRHGIAIAGTHGKTTTTAMISMIYTEAGLDPTFVNGGLVKSAGKNAHLGASRYLIAEADESDASFLHLQPMVSVVTNIEPDHMDTYGGDFEKMKETYVRFLRNLPFYGLAVMCADDETVMEIAPKVGRQVISYGFSEKADYRIEDYQQTGFQGHYTVVCPTGERIEILLNVPGRHNALNATAALAVAKEEGIANEAILAALADFQGAGRRFDQLGSFIRPNGKVMLVDDYGHHPTEVDVTIKAARQGWENKRVVMVFQPHRYSRTRDLFDDFVQVLSQVDALIMLNVYAAGEAPIVGAESKDLCRSIRNLGKVDPILVSDTSQLGEVLDQIIQDGDLILAQGAGNVSKLSRDLAESWKA</sequence>